<evidence type="ECO:0000250" key="1"/>
<evidence type="ECO:0000255" key="2"/>
<evidence type="ECO:0000256" key="3">
    <source>
        <dbReference type="SAM" id="MobiDB-lite"/>
    </source>
</evidence>
<evidence type="ECO:0000305" key="4"/>
<protein>
    <recommendedName>
        <fullName>cAMP-dependent protein kinase regulatory subunit</fullName>
        <shortName>PKA regulatory subunit</shortName>
    </recommendedName>
</protein>
<comment type="subunit">
    <text evidence="1">Tetramer, composed of 2 regulatory (R) and 2 catalytic (C) subunits. In the presence of cAMP it dissociates into 2 active monomeric C subunits and an R dimer (By similarity).</text>
</comment>
<comment type="similarity">
    <text evidence="4">Belongs to the cAMP-dependent kinase regulatory chain family.</text>
</comment>
<dbReference type="EMBL" id="AF043231">
    <property type="protein sequence ID" value="AAC18061.1"/>
    <property type="molecule type" value="Genomic_DNA"/>
</dbReference>
<dbReference type="EMBL" id="AACD01000084">
    <property type="protein sequence ID" value="EAA61065.1"/>
    <property type="molecule type" value="Genomic_DNA"/>
</dbReference>
<dbReference type="EMBL" id="BN001303">
    <property type="protein sequence ID" value="CBF76336.1"/>
    <property type="molecule type" value="Genomic_DNA"/>
</dbReference>
<dbReference type="RefSeq" id="XP_662591.1">
    <property type="nucleotide sequence ID" value="XM_657499.1"/>
</dbReference>
<dbReference type="SMR" id="O59922"/>
<dbReference type="FunCoup" id="O59922">
    <property type="interactions" value="420"/>
</dbReference>
<dbReference type="STRING" id="227321.O59922"/>
<dbReference type="EnsemblFungi" id="CBF76336">
    <property type="protein sequence ID" value="CBF76336"/>
    <property type="gene ID" value="ANIA_04987"/>
</dbReference>
<dbReference type="KEGG" id="ani:ANIA_04987"/>
<dbReference type="VEuPathDB" id="FungiDB:AN4987"/>
<dbReference type="eggNOG" id="KOG1113">
    <property type="taxonomic scope" value="Eukaryota"/>
</dbReference>
<dbReference type="HOGENOM" id="CLU_018310_0_0_1"/>
<dbReference type="InParanoid" id="O59922"/>
<dbReference type="OMA" id="WSPPHHP"/>
<dbReference type="OrthoDB" id="417078at2759"/>
<dbReference type="Proteomes" id="UP000000560">
    <property type="component" value="Chromosome III"/>
</dbReference>
<dbReference type="GO" id="GO:0005952">
    <property type="term" value="C:cAMP-dependent protein kinase complex"/>
    <property type="evidence" value="ECO:0000318"/>
    <property type="project" value="GO_Central"/>
</dbReference>
<dbReference type="GO" id="GO:0005829">
    <property type="term" value="C:cytosol"/>
    <property type="evidence" value="ECO:0000318"/>
    <property type="project" value="GO_Central"/>
</dbReference>
<dbReference type="GO" id="GO:0005634">
    <property type="term" value="C:nucleus"/>
    <property type="evidence" value="ECO:0000318"/>
    <property type="project" value="GO_Central"/>
</dbReference>
<dbReference type="GO" id="GO:0030552">
    <property type="term" value="F:cAMP binding"/>
    <property type="evidence" value="ECO:0000318"/>
    <property type="project" value="GO_Central"/>
</dbReference>
<dbReference type="GO" id="GO:0004862">
    <property type="term" value="F:cAMP-dependent protein kinase inhibitor activity"/>
    <property type="evidence" value="ECO:0000318"/>
    <property type="project" value="GO_Central"/>
</dbReference>
<dbReference type="GO" id="GO:0034236">
    <property type="term" value="F:protein kinase A catalytic subunit binding"/>
    <property type="evidence" value="ECO:0000318"/>
    <property type="project" value="GO_Central"/>
</dbReference>
<dbReference type="GO" id="GO:0007189">
    <property type="term" value="P:adenylate cyclase-activating G protein-coupled receptor signaling pathway"/>
    <property type="evidence" value="ECO:0000318"/>
    <property type="project" value="GO_Central"/>
</dbReference>
<dbReference type="CDD" id="cd00038">
    <property type="entry name" value="CAP_ED"/>
    <property type="match status" value="2"/>
</dbReference>
<dbReference type="FunFam" id="2.60.120.10:FF:000039">
    <property type="entry name" value="cAMP-dependent protein kinase regulatory subunit"/>
    <property type="match status" value="1"/>
</dbReference>
<dbReference type="FunFam" id="2.60.120.10:FF:000006">
    <property type="entry name" value="cAMP-dependent protein kinase type I-alpha regulatory subunit"/>
    <property type="match status" value="1"/>
</dbReference>
<dbReference type="Gene3D" id="2.60.120.10">
    <property type="entry name" value="Jelly Rolls"/>
    <property type="match status" value="2"/>
</dbReference>
<dbReference type="InterPro" id="IPR050503">
    <property type="entry name" value="cAMP-dep_PK_reg_su-like"/>
</dbReference>
<dbReference type="InterPro" id="IPR012198">
    <property type="entry name" value="cAMP_dep_PK_reg_su"/>
</dbReference>
<dbReference type="InterPro" id="IPR018488">
    <property type="entry name" value="cNMP-bd_CS"/>
</dbReference>
<dbReference type="InterPro" id="IPR000595">
    <property type="entry name" value="cNMP-bd_dom"/>
</dbReference>
<dbReference type="InterPro" id="IPR018490">
    <property type="entry name" value="cNMP-bd_dom_sf"/>
</dbReference>
<dbReference type="InterPro" id="IPR014710">
    <property type="entry name" value="RmlC-like_jellyroll"/>
</dbReference>
<dbReference type="PANTHER" id="PTHR11635">
    <property type="entry name" value="CAMP-DEPENDENT PROTEIN KINASE REGULATORY CHAIN"/>
    <property type="match status" value="1"/>
</dbReference>
<dbReference type="PANTHER" id="PTHR11635:SF152">
    <property type="entry name" value="CAMP-DEPENDENT PROTEIN KINASE TYPE I REGULATORY SUBUNIT-RELATED"/>
    <property type="match status" value="1"/>
</dbReference>
<dbReference type="Pfam" id="PF00027">
    <property type="entry name" value="cNMP_binding"/>
    <property type="match status" value="2"/>
</dbReference>
<dbReference type="PIRSF" id="PIRSF000548">
    <property type="entry name" value="PK_regulatory"/>
    <property type="match status" value="1"/>
</dbReference>
<dbReference type="PRINTS" id="PR00103">
    <property type="entry name" value="CAMPKINASE"/>
</dbReference>
<dbReference type="SMART" id="SM00100">
    <property type="entry name" value="cNMP"/>
    <property type="match status" value="2"/>
</dbReference>
<dbReference type="SUPFAM" id="SSF51206">
    <property type="entry name" value="cAMP-binding domain-like"/>
    <property type="match status" value="2"/>
</dbReference>
<dbReference type="PROSITE" id="PS00888">
    <property type="entry name" value="CNMP_BINDING_1"/>
    <property type="match status" value="2"/>
</dbReference>
<dbReference type="PROSITE" id="PS00889">
    <property type="entry name" value="CNMP_BINDING_2"/>
    <property type="match status" value="2"/>
</dbReference>
<dbReference type="PROSITE" id="PS50042">
    <property type="entry name" value="CNMP_BINDING_3"/>
    <property type="match status" value="2"/>
</dbReference>
<gene>
    <name type="primary">pkaR</name>
    <name type="ORF">AN4987</name>
</gene>
<reference key="1">
    <citation type="submission" date="1998-01" db="EMBL/GenBank/DDBJ databases">
        <title>Characterization of the Aspergillus nidulans pkaR gene encoding the cAMP dependent protein kinase regulatory subunit.</title>
        <authorList>
            <person name="D'Enfert C."/>
        </authorList>
    </citation>
    <scope>NUCLEOTIDE SEQUENCE [GENOMIC DNA]</scope>
</reference>
<reference key="2">
    <citation type="journal article" date="2005" name="Nature">
        <title>Sequencing of Aspergillus nidulans and comparative analysis with A. fumigatus and A. oryzae.</title>
        <authorList>
            <person name="Galagan J.E."/>
            <person name="Calvo S.E."/>
            <person name="Cuomo C."/>
            <person name="Ma L.-J."/>
            <person name="Wortman J.R."/>
            <person name="Batzoglou S."/>
            <person name="Lee S.-I."/>
            <person name="Bastuerkmen M."/>
            <person name="Spevak C.C."/>
            <person name="Clutterbuck J."/>
            <person name="Kapitonov V."/>
            <person name="Jurka J."/>
            <person name="Scazzocchio C."/>
            <person name="Farman M.L."/>
            <person name="Butler J."/>
            <person name="Purcell S."/>
            <person name="Harris S."/>
            <person name="Braus G.H."/>
            <person name="Draht O."/>
            <person name="Busch S."/>
            <person name="D'Enfert C."/>
            <person name="Bouchier C."/>
            <person name="Goldman G.H."/>
            <person name="Bell-Pedersen D."/>
            <person name="Griffiths-Jones S."/>
            <person name="Doonan J.H."/>
            <person name="Yu J."/>
            <person name="Vienken K."/>
            <person name="Pain A."/>
            <person name="Freitag M."/>
            <person name="Selker E.U."/>
            <person name="Archer D.B."/>
            <person name="Penalva M.A."/>
            <person name="Oakley B.R."/>
            <person name="Momany M."/>
            <person name="Tanaka T."/>
            <person name="Kumagai T."/>
            <person name="Asai K."/>
            <person name="Machida M."/>
            <person name="Nierman W.C."/>
            <person name="Denning D.W."/>
            <person name="Caddick M.X."/>
            <person name="Hynes M."/>
            <person name="Paoletti M."/>
            <person name="Fischer R."/>
            <person name="Miller B.L."/>
            <person name="Dyer P.S."/>
            <person name="Sachs M.S."/>
            <person name="Osmani S.A."/>
            <person name="Birren B.W."/>
        </authorList>
    </citation>
    <scope>NUCLEOTIDE SEQUENCE [LARGE SCALE GENOMIC DNA]</scope>
    <source>
        <strain>FGSC A4 / ATCC 38163 / CBS 112.46 / NRRL 194 / M139</strain>
    </source>
</reference>
<reference key="3">
    <citation type="journal article" date="2009" name="Fungal Genet. Biol.">
        <title>The 2008 update of the Aspergillus nidulans genome annotation: a community effort.</title>
        <authorList>
            <person name="Wortman J.R."/>
            <person name="Gilsenan J.M."/>
            <person name="Joardar V."/>
            <person name="Deegan J."/>
            <person name="Clutterbuck J."/>
            <person name="Andersen M.R."/>
            <person name="Archer D."/>
            <person name="Bencina M."/>
            <person name="Braus G."/>
            <person name="Coutinho P."/>
            <person name="von Dohren H."/>
            <person name="Doonan J."/>
            <person name="Driessen A.J."/>
            <person name="Durek P."/>
            <person name="Espeso E."/>
            <person name="Fekete E."/>
            <person name="Flipphi M."/>
            <person name="Estrada C.G."/>
            <person name="Geysens S."/>
            <person name="Goldman G."/>
            <person name="de Groot P.W."/>
            <person name="Hansen K."/>
            <person name="Harris S.D."/>
            <person name="Heinekamp T."/>
            <person name="Helmstaedt K."/>
            <person name="Henrissat B."/>
            <person name="Hofmann G."/>
            <person name="Homan T."/>
            <person name="Horio T."/>
            <person name="Horiuchi H."/>
            <person name="James S."/>
            <person name="Jones M."/>
            <person name="Karaffa L."/>
            <person name="Karanyi Z."/>
            <person name="Kato M."/>
            <person name="Keller N."/>
            <person name="Kelly D.E."/>
            <person name="Kiel J.A."/>
            <person name="Kim J.M."/>
            <person name="van der Klei I.J."/>
            <person name="Klis F.M."/>
            <person name="Kovalchuk A."/>
            <person name="Krasevec N."/>
            <person name="Kubicek C.P."/>
            <person name="Liu B."/>
            <person name="Maccabe A."/>
            <person name="Meyer V."/>
            <person name="Mirabito P."/>
            <person name="Miskei M."/>
            <person name="Mos M."/>
            <person name="Mullins J."/>
            <person name="Nelson D.R."/>
            <person name="Nielsen J."/>
            <person name="Oakley B.R."/>
            <person name="Osmani S.A."/>
            <person name="Pakula T."/>
            <person name="Paszewski A."/>
            <person name="Paulsen I."/>
            <person name="Pilsyk S."/>
            <person name="Pocsi I."/>
            <person name="Punt P.J."/>
            <person name="Ram A.F."/>
            <person name="Ren Q."/>
            <person name="Robellet X."/>
            <person name="Robson G."/>
            <person name="Seiboth B."/>
            <person name="van Solingen P."/>
            <person name="Specht T."/>
            <person name="Sun J."/>
            <person name="Taheri-Talesh N."/>
            <person name="Takeshita N."/>
            <person name="Ussery D."/>
            <person name="vanKuyk P.A."/>
            <person name="Visser H."/>
            <person name="van de Vondervoort P.J."/>
            <person name="de Vries R.P."/>
            <person name="Walton J."/>
            <person name="Xiang X."/>
            <person name="Xiong Y."/>
            <person name="Zeng A.P."/>
            <person name="Brandt B.W."/>
            <person name="Cornell M.J."/>
            <person name="van den Hondel C.A."/>
            <person name="Visser J."/>
            <person name="Oliver S.G."/>
            <person name="Turner G."/>
        </authorList>
    </citation>
    <scope>GENOME REANNOTATION</scope>
    <source>
        <strain>FGSC A4 / ATCC 38163 / CBS 112.46 / NRRL 194 / M139</strain>
    </source>
</reference>
<keyword id="KW-0114">cAMP</keyword>
<keyword id="KW-0116">cAMP-binding</keyword>
<keyword id="KW-0547">Nucleotide-binding</keyword>
<keyword id="KW-0597">Phosphoprotein</keyword>
<keyword id="KW-1185">Reference proteome</keyword>
<keyword id="KW-0677">Repeat</keyword>
<feature type="chain" id="PRO_0000205408" description="cAMP-dependent protein kinase regulatory subunit">
    <location>
        <begin position="1"/>
        <end position="412"/>
    </location>
</feature>
<feature type="region of interest" description="Disordered" evidence="3">
    <location>
        <begin position="1"/>
        <end position="146"/>
    </location>
</feature>
<feature type="region of interest" description="Dimerization and phosphorylation" evidence="2">
    <location>
        <begin position="23"/>
        <end position="159"/>
    </location>
</feature>
<feature type="compositionally biased region" description="Polar residues" evidence="3">
    <location>
        <begin position="1"/>
        <end position="11"/>
    </location>
</feature>
<feature type="compositionally biased region" description="Basic and acidic residues" evidence="3">
    <location>
        <begin position="16"/>
        <end position="29"/>
    </location>
</feature>
<feature type="compositionally biased region" description="Polar residues" evidence="3">
    <location>
        <begin position="49"/>
        <end position="60"/>
    </location>
</feature>
<feature type="compositionally biased region" description="Polar residues" evidence="3">
    <location>
        <begin position="119"/>
        <end position="138"/>
    </location>
</feature>
<feature type="binding site">
    <location>
        <begin position="160"/>
        <end position="291"/>
    </location>
    <ligand>
        <name>3',5'-cyclic AMP</name>
        <dbReference type="ChEBI" id="CHEBI:58165"/>
        <label>1</label>
    </ligand>
</feature>
<feature type="binding site" evidence="1">
    <location>
        <position position="238"/>
    </location>
    <ligand>
        <name>3',5'-cyclic AMP</name>
        <dbReference type="ChEBI" id="CHEBI:58165"/>
        <label>1</label>
    </ligand>
</feature>
<feature type="binding site" evidence="1">
    <location>
        <position position="247"/>
    </location>
    <ligand>
        <name>3',5'-cyclic AMP</name>
        <dbReference type="ChEBI" id="CHEBI:58165"/>
        <label>1</label>
    </ligand>
</feature>
<feature type="binding site">
    <location>
        <begin position="292"/>
        <end position="405"/>
    </location>
    <ligand>
        <name>3',5'-cyclic AMP</name>
        <dbReference type="ChEBI" id="CHEBI:58165"/>
        <label>2</label>
    </ligand>
</feature>
<feature type="binding site" evidence="1">
    <location>
        <position position="359"/>
    </location>
    <ligand>
        <name>3',5'-cyclic AMP</name>
        <dbReference type="ChEBI" id="CHEBI:58165"/>
        <label>2</label>
    </ligand>
</feature>
<feature type="binding site" evidence="1">
    <location>
        <position position="368"/>
    </location>
    <ligand>
        <name>3',5'-cyclic AMP</name>
        <dbReference type="ChEBI" id="CHEBI:58165"/>
        <label>2</label>
    </ligand>
</feature>
<feature type="modified residue" description="Phosphoserine" evidence="1">
    <location>
        <position position="120"/>
    </location>
</feature>
<proteinExistence type="inferred from homology"/>
<name>KAPR_EMENI</name>
<accession>O59922</accession>
<accession>C8V8P0</accession>
<accession>Q5B393</accession>
<organism>
    <name type="scientific">Emericella nidulans (strain FGSC A4 / ATCC 38163 / CBS 112.46 / NRRL 194 / M139)</name>
    <name type="common">Aspergillus nidulans</name>
    <dbReference type="NCBI Taxonomy" id="227321"/>
    <lineage>
        <taxon>Eukaryota</taxon>
        <taxon>Fungi</taxon>
        <taxon>Dikarya</taxon>
        <taxon>Ascomycota</taxon>
        <taxon>Pezizomycotina</taxon>
        <taxon>Eurotiomycetes</taxon>
        <taxon>Eurotiomycetidae</taxon>
        <taxon>Eurotiales</taxon>
        <taxon>Aspergillaceae</taxon>
        <taxon>Aspergillus</taxon>
        <taxon>Aspergillus subgen. Nidulantes</taxon>
    </lineage>
</organism>
<sequence length="412" mass="44904">MSNYSHSSNNPFLKVSTKEDKPSSFHKIAEDEEYEVTSPTDATFRASKNADNSAGGNNPLESGRAGESGDGIRFGRDPFGNFQGGAEGQDESSIDPNGFRPTGGPDHGFPNNYALGRRTSVSAESLNPTSAGSDSWTPPSHPKSEEQLARLKTAVSNNFLFSHLDDEQSRTVLDALVEKPIPAKDIKVISQGDAGDYFYIVEEGHFDVYINPSGSVQPGPDGAGTKISTIGPGGSFGELALMYNAPRAATIVSTEPKSTLWALDRITFRRILMDSAFQRRRMYEAFLEEVPLLSSLKPYERAKIADALDTIKFPAGEYIIKEGDPGDAFYLLESGEAEAFMEGVEEPVKSYKRGDYFGELALLDDKPRAASVRAKTEVKVAKLGRDGFKRLLGPVENIMRRTEYSSRPSTAT</sequence>